<name>TTC4_MOUSE</name>
<feature type="chain" id="PRO_0000106380" description="Tetratricopeptide repeat protein 4">
    <location>
        <begin position="1"/>
        <end position="386"/>
    </location>
</feature>
<feature type="repeat" description="TPR 1">
    <location>
        <begin position="79"/>
        <end position="112"/>
    </location>
</feature>
<feature type="repeat" description="TPR 2">
    <location>
        <begin position="117"/>
        <end position="150"/>
    </location>
</feature>
<feature type="repeat" description="TPR 3">
    <location>
        <begin position="151"/>
        <end position="184"/>
    </location>
</feature>
<feature type="site" description="Essential for interaction with CDC6" evidence="1">
    <location>
        <position position="77"/>
    </location>
</feature>
<feature type="site" description="Essential for interaction with HSPA8" evidence="1">
    <location>
        <position position="152"/>
    </location>
</feature>
<feature type="site" description="Essential for interaction with HSPA8" evidence="1">
    <location>
        <position position="156"/>
    </location>
</feature>
<feature type="modified residue" description="N-acetylmethionine" evidence="1">
    <location>
        <position position="1"/>
    </location>
</feature>
<feature type="modified residue" description="Phosphoserine" evidence="1">
    <location>
        <position position="51"/>
    </location>
</feature>
<feature type="modified residue" description="Phosphoserine" evidence="1">
    <location>
        <position position="244"/>
    </location>
</feature>
<comment type="function">
    <text evidence="1">May act as a co-chaperone for HSP90AB1 (By similarity).</text>
</comment>
<comment type="subunit">
    <text evidence="1 2">Interacts (via TPR repeats) with HSP90AB1 (By similarity). Interacts with HSPA8, CDC6 and TBK1 (By similarity). Interacts with isoform 1 and isoform 3 of MSL1 (PubMed:17335777).</text>
</comment>
<comment type="subcellular location">
    <subcellularLocation>
        <location evidence="2 3 4">Nucleus</location>
    </subcellularLocation>
    <subcellularLocation>
        <location evidence="1">Nucleus</location>
        <location evidence="1">Nucleoplasm</location>
    </subcellularLocation>
    <subcellularLocation>
        <location evidence="3">Cytoplasm</location>
    </subcellularLocation>
    <text evidence="3 4">Predominantly nuclear in the G1 and S phases of cell cycle and is evenly distributed between the nucleus and cytoplasm in the G2 phase (PubMed:19390865). MSL1 can promote its nuclear localization (PubMed:19390865, PubMed:24913909).</text>
</comment>
<comment type="tissue specificity">
    <text evidence="3">Expressed at high levels in the heart, testis, kidney, brain and tongue (PubMed:19390865). Expressed at low levels in the stomach, lung and liver (PubMed:19390865).</text>
</comment>
<comment type="similarity">
    <text evidence="5">Belongs to the TTC4 family.</text>
</comment>
<sequence>MESSEPEPTEDASMDAFLEKFQSQPYRGGFREDQWEEEFDKIPLFMKKAPSEIDPEEFPDLACLQSMIFDDDRYPEEQAKTYKDEGNDYFKEKDYKKAVLSYSEGLKKKCADPDLNAVLYTNRAAAQYYLGNVRSSLNDVLAAKKLKPGHLKAIIRGALCHLELKHFAEAVNWCDEGLQIDAKEKKLLEIRAKADKLKRMEERDLRKAKLKEKKEQHQNEALLQAIKARNIRLVSESAGEDEDSASNGPAEILLDGLSSENPYGARLSIDDQGRLSWPVLFLYPEYAQSDFISAFHEDTRFIDHLMAMFSEAPSWDSEHKYHPENLEVYFEDEDRAELYQVSPDSTLLQVLQHPRCCVKALTPAFLVCVGSSPFCRNYLQGKKVHR</sequence>
<organism>
    <name type="scientific">Mus musculus</name>
    <name type="common">Mouse</name>
    <dbReference type="NCBI Taxonomy" id="10090"/>
    <lineage>
        <taxon>Eukaryota</taxon>
        <taxon>Metazoa</taxon>
        <taxon>Chordata</taxon>
        <taxon>Craniata</taxon>
        <taxon>Vertebrata</taxon>
        <taxon>Euteleostomi</taxon>
        <taxon>Mammalia</taxon>
        <taxon>Eutheria</taxon>
        <taxon>Euarchontoglires</taxon>
        <taxon>Glires</taxon>
        <taxon>Rodentia</taxon>
        <taxon>Myomorpha</taxon>
        <taxon>Muroidea</taxon>
        <taxon>Muridae</taxon>
        <taxon>Murinae</taxon>
        <taxon>Mus</taxon>
        <taxon>Mus</taxon>
    </lineage>
</organism>
<reference key="1">
    <citation type="journal article" date="2004" name="Genome Res.">
        <title>The status, quality, and expansion of the NIH full-length cDNA project: the Mammalian Gene Collection (MGC).</title>
        <authorList>
            <consortium name="The MGC Project Team"/>
        </authorList>
    </citation>
    <scope>NUCLEOTIDE SEQUENCE [LARGE SCALE MRNA]</scope>
</reference>
<reference key="2">
    <citation type="journal article" date="2007" name="Biochem. Biophys. Res. Commun.">
        <title>Characterization of hampin/MSL1 as a node in the nuclear interactome.</title>
        <authorList>
            <person name="Dmitriev R.I."/>
            <person name="Korneenko T.V."/>
            <person name="Bessonov A.A."/>
            <person name="Shakhparonov M.I."/>
            <person name="Modyanov N.N."/>
            <person name="Pestov N.B."/>
        </authorList>
    </citation>
    <scope>INTERACTION WITH MSL1</scope>
    <scope>SUBCELLULAR LOCATION</scope>
</reference>
<reference key="3">
    <citation type="journal article" date="2009" name="Cell Tissue Res.">
        <title>Nuclear transport of protein TTC4 depends on the cell cycle.</title>
        <authorList>
            <person name="Dmitriev R.I."/>
            <person name="Okkelman I.A."/>
            <person name="Abdulin R.A."/>
            <person name="Shakhparonov M.I."/>
            <person name="Pestov N.B."/>
        </authorList>
    </citation>
    <scope>SUBCELLULAR LOCATION</scope>
    <scope>TISSUE SPECIFICITY</scope>
</reference>
<reference key="4">
    <citation type="journal article" date="2010" name="Cell">
        <title>A tissue-specific atlas of mouse protein phosphorylation and expression.</title>
        <authorList>
            <person name="Huttlin E.L."/>
            <person name="Jedrychowski M.P."/>
            <person name="Elias J.E."/>
            <person name="Goswami T."/>
            <person name="Rad R."/>
            <person name="Beausoleil S.A."/>
            <person name="Villen J."/>
            <person name="Haas W."/>
            <person name="Sowa M.E."/>
            <person name="Gygi S.P."/>
        </authorList>
    </citation>
    <scope>IDENTIFICATION BY MASS SPECTROMETRY [LARGE SCALE ANALYSIS]</scope>
    <source>
        <tissue>Spleen</tissue>
        <tissue>Testis</tissue>
    </source>
</reference>
<reference key="5">
    <citation type="journal article" date="2014" name="J. Cell. Biochem.">
        <title>Two distinct nuclear localization signals in mammalian MSL1 regulate its function.</title>
        <authorList>
            <person name="Dmitriev R.I."/>
            <person name="Pestov N.B."/>
            <person name="Shakhparonov M.I."/>
            <person name="Okkelman I.A."/>
        </authorList>
    </citation>
    <scope>SUBCELLULAR LOCATION</scope>
</reference>
<keyword id="KW-0007">Acetylation</keyword>
<keyword id="KW-0051">Antiviral defense</keyword>
<keyword id="KW-0963">Cytoplasm</keyword>
<keyword id="KW-0391">Immunity</keyword>
<keyword id="KW-0399">Innate immunity</keyword>
<keyword id="KW-0539">Nucleus</keyword>
<keyword id="KW-0597">Phosphoprotein</keyword>
<keyword id="KW-1185">Reference proteome</keyword>
<keyword id="KW-0677">Repeat</keyword>
<keyword id="KW-0802">TPR repeat</keyword>
<accession>Q8R3H9</accession>
<gene>
    <name type="primary">Ttc4</name>
</gene>
<protein>
    <recommendedName>
        <fullName>Tetratricopeptide repeat protein 4</fullName>
        <shortName>TPR repeat protein 4</shortName>
    </recommendedName>
</protein>
<dbReference type="EMBL" id="BC025435">
    <property type="protein sequence ID" value="AAH25435.1"/>
    <property type="molecule type" value="mRNA"/>
</dbReference>
<dbReference type="CCDS" id="CCDS18424.1"/>
<dbReference type="RefSeq" id="NP_082485.1">
    <property type="nucleotide sequence ID" value="NM_028209.2"/>
</dbReference>
<dbReference type="SMR" id="Q8R3H9"/>
<dbReference type="BioGRID" id="215330">
    <property type="interactions" value="38"/>
</dbReference>
<dbReference type="FunCoup" id="Q8R3H9">
    <property type="interactions" value="4654"/>
</dbReference>
<dbReference type="STRING" id="10090.ENSMUSP00000026480"/>
<dbReference type="iPTMnet" id="Q8R3H9"/>
<dbReference type="PhosphoSitePlus" id="Q8R3H9"/>
<dbReference type="PaxDb" id="10090-ENSMUSP00000026480"/>
<dbReference type="PeptideAtlas" id="Q8R3H9"/>
<dbReference type="ProteomicsDB" id="297749"/>
<dbReference type="Pumba" id="Q8R3H9"/>
<dbReference type="Antibodypedia" id="34867">
    <property type="antibodies" value="84 antibodies from 19 providers"/>
</dbReference>
<dbReference type="Ensembl" id="ENSMUST00000026480.13">
    <property type="protein sequence ID" value="ENSMUSP00000026480.7"/>
    <property type="gene ID" value="ENSMUSG00000025413.14"/>
</dbReference>
<dbReference type="GeneID" id="72354"/>
<dbReference type="KEGG" id="mmu:72354"/>
<dbReference type="UCSC" id="uc008tyr.2">
    <property type="organism name" value="mouse"/>
</dbReference>
<dbReference type="AGR" id="MGI:1919604"/>
<dbReference type="CTD" id="7268"/>
<dbReference type="MGI" id="MGI:1919604">
    <property type="gene designation" value="Ttc4"/>
</dbReference>
<dbReference type="VEuPathDB" id="HostDB:ENSMUSG00000025413"/>
<dbReference type="eggNOG" id="KOG0551">
    <property type="taxonomic scope" value="Eukaryota"/>
</dbReference>
<dbReference type="GeneTree" id="ENSGT00510000049371"/>
<dbReference type="HOGENOM" id="CLU_040446_2_0_1"/>
<dbReference type="InParanoid" id="Q8R3H9"/>
<dbReference type="OMA" id="WRAAQCA"/>
<dbReference type="OrthoDB" id="420195at2759"/>
<dbReference type="PhylomeDB" id="Q8R3H9"/>
<dbReference type="TreeFam" id="TF314657"/>
<dbReference type="BioGRID-ORCS" id="72354">
    <property type="hits" value="23 hits in 77 CRISPR screens"/>
</dbReference>
<dbReference type="PRO" id="PR:Q8R3H9"/>
<dbReference type="Proteomes" id="UP000000589">
    <property type="component" value="Chromosome 4"/>
</dbReference>
<dbReference type="RNAct" id="Q8R3H9">
    <property type="molecule type" value="protein"/>
</dbReference>
<dbReference type="Bgee" id="ENSMUSG00000025413">
    <property type="expression patterns" value="Expressed in spermatocyte and 249 other cell types or tissues"/>
</dbReference>
<dbReference type="ExpressionAtlas" id="Q8R3H9">
    <property type="expression patterns" value="baseline and differential"/>
</dbReference>
<dbReference type="GO" id="GO:0005737">
    <property type="term" value="C:cytoplasm"/>
    <property type="evidence" value="ECO:0000314"/>
    <property type="project" value="UniProtKB"/>
</dbReference>
<dbReference type="GO" id="GO:0005654">
    <property type="term" value="C:nucleoplasm"/>
    <property type="evidence" value="ECO:0007669"/>
    <property type="project" value="UniProtKB-SubCell"/>
</dbReference>
<dbReference type="GO" id="GO:0005634">
    <property type="term" value="C:nucleus"/>
    <property type="evidence" value="ECO:0000314"/>
    <property type="project" value="UniProtKB"/>
</dbReference>
<dbReference type="GO" id="GO:0051879">
    <property type="term" value="F:Hsp90 protein binding"/>
    <property type="evidence" value="ECO:0007669"/>
    <property type="project" value="InterPro"/>
</dbReference>
<dbReference type="GO" id="GO:0051607">
    <property type="term" value="P:defense response to virus"/>
    <property type="evidence" value="ECO:0000250"/>
    <property type="project" value="UniProtKB"/>
</dbReference>
<dbReference type="GO" id="GO:0045087">
    <property type="term" value="P:innate immune response"/>
    <property type="evidence" value="ECO:0000250"/>
    <property type="project" value="UniProtKB"/>
</dbReference>
<dbReference type="CDD" id="cd21380">
    <property type="entry name" value="CTWD_Cns1"/>
    <property type="match status" value="1"/>
</dbReference>
<dbReference type="Gene3D" id="1.25.40.10">
    <property type="entry name" value="Tetratricopeptide repeat domain"/>
    <property type="match status" value="1"/>
</dbReference>
<dbReference type="InterPro" id="IPR044059">
    <property type="entry name" value="Csn1/TTC4_wheel"/>
</dbReference>
<dbReference type="InterPro" id="IPR011990">
    <property type="entry name" value="TPR-like_helical_dom_sf"/>
</dbReference>
<dbReference type="InterPro" id="IPR019734">
    <property type="entry name" value="TPR_rpt"/>
</dbReference>
<dbReference type="PANTHER" id="PTHR46035">
    <property type="entry name" value="TETRATRICOPEPTIDE REPEAT PROTEIN 4"/>
    <property type="match status" value="1"/>
</dbReference>
<dbReference type="PANTHER" id="PTHR46035:SF1">
    <property type="entry name" value="TETRATRICOPEPTIDE REPEAT PROTEIN 4"/>
    <property type="match status" value="1"/>
</dbReference>
<dbReference type="Pfam" id="PF18972">
    <property type="entry name" value="Wheel"/>
    <property type="match status" value="1"/>
</dbReference>
<dbReference type="SMART" id="SM00028">
    <property type="entry name" value="TPR"/>
    <property type="match status" value="3"/>
</dbReference>
<dbReference type="SUPFAM" id="SSF48452">
    <property type="entry name" value="TPR-like"/>
    <property type="match status" value="1"/>
</dbReference>
<dbReference type="PROSITE" id="PS50293">
    <property type="entry name" value="TPR_REGION"/>
    <property type="match status" value="1"/>
</dbReference>
<proteinExistence type="evidence at protein level"/>
<evidence type="ECO:0000250" key="1">
    <source>
        <dbReference type="UniProtKB" id="O95801"/>
    </source>
</evidence>
<evidence type="ECO:0000269" key="2">
    <source>
    </source>
</evidence>
<evidence type="ECO:0000269" key="3">
    <source>
    </source>
</evidence>
<evidence type="ECO:0000269" key="4">
    <source>
    </source>
</evidence>
<evidence type="ECO:0000305" key="5"/>